<accession>B3CQF1</accession>
<organism>
    <name type="scientific">Orientia tsutsugamushi (strain Ikeda)</name>
    <name type="common">Rickettsia tsutsugamushi</name>
    <dbReference type="NCBI Taxonomy" id="334380"/>
    <lineage>
        <taxon>Bacteria</taxon>
        <taxon>Pseudomonadati</taxon>
        <taxon>Pseudomonadota</taxon>
        <taxon>Alphaproteobacteria</taxon>
        <taxon>Rickettsiales</taxon>
        <taxon>Rickettsiaceae</taxon>
        <taxon>Rickettsieae</taxon>
        <taxon>Orientia</taxon>
    </lineage>
</organism>
<name>RL36_ORITI</name>
<comment type="similarity">
    <text evidence="1">Belongs to the bacterial ribosomal protein bL36 family.</text>
</comment>
<feature type="chain" id="PRO_1000101052" description="Large ribosomal subunit protein bL36">
    <location>
        <begin position="1"/>
        <end position="41"/>
    </location>
</feature>
<proteinExistence type="inferred from homology"/>
<gene>
    <name evidence="1" type="primary">rpmJ</name>
    <name type="ordered locus">OTT_0032</name>
</gene>
<sequence length="41" mass="4777">MKVVSSLKSLKNRDKSCQVVKRRGKIFVINKKNKKFKARQG</sequence>
<evidence type="ECO:0000255" key="1">
    <source>
        <dbReference type="HAMAP-Rule" id="MF_00251"/>
    </source>
</evidence>
<evidence type="ECO:0000305" key="2"/>
<reference key="1">
    <citation type="journal article" date="2008" name="DNA Res.">
        <title>The whole-genome sequencing of the obligate intracellular bacterium Orientia tsutsugamushi revealed massive gene amplification during reductive genome evolution.</title>
        <authorList>
            <person name="Nakayama K."/>
            <person name="Yamashita A."/>
            <person name="Kurokawa K."/>
            <person name="Morimoto T."/>
            <person name="Ogawa M."/>
            <person name="Fukuhara M."/>
            <person name="Urakami H."/>
            <person name="Ohnishi M."/>
            <person name="Uchiyama I."/>
            <person name="Ogura Y."/>
            <person name="Ooka T."/>
            <person name="Oshima K."/>
            <person name="Tamura A."/>
            <person name="Hattori M."/>
            <person name="Hayashi T."/>
        </authorList>
    </citation>
    <scope>NUCLEOTIDE SEQUENCE [LARGE SCALE GENOMIC DNA]</scope>
    <source>
        <strain>Ikeda</strain>
    </source>
</reference>
<keyword id="KW-0687">Ribonucleoprotein</keyword>
<keyword id="KW-0689">Ribosomal protein</keyword>
<dbReference type="EMBL" id="AP008981">
    <property type="protein sequence ID" value="BAG39490.1"/>
    <property type="molecule type" value="Genomic_DNA"/>
</dbReference>
<dbReference type="SMR" id="B3CQF1"/>
<dbReference type="KEGG" id="ott:OTT_0032"/>
<dbReference type="HOGENOM" id="CLU_135723_3_2_5"/>
<dbReference type="Proteomes" id="UP000001033">
    <property type="component" value="Chromosome"/>
</dbReference>
<dbReference type="GO" id="GO:1990904">
    <property type="term" value="C:ribonucleoprotein complex"/>
    <property type="evidence" value="ECO:0007669"/>
    <property type="project" value="UniProtKB-KW"/>
</dbReference>
<dbReference type="GO" id="GO:0005840">
    <property type="term" value="C:ribosome"/>
    <property type="evidence" value="ECO:0007669"/>
    <property type="project" value="UniProtKB-KW"/>
</dbReference>
<dbReference type="GO" id="GO:0003735">
    <property type="term" value="F:structural constituent of ribosome"/>
    <property type="evidence" value="ECO:0007669"/>
    <property type="project" value="InterPro"/>
</dbReference>
<dbReference type="GO" id="GO:0006412">
    <property type="term" value="P:translation"/>
    <property type="evidence" value="ECO:0007669"/>
    <property type="project" value="UniProtKB-UniRule"/>
</dbReference>
<dbReference type="HAMAP" id="MF_00251">
    <property type="entry name" value="Ribosomal_bL36"/>
    <property type="match status" value="1"/>
</dbReference>
<dbReference type="InterPro" id="IPR000473">
    <property type="entry name" value="Ribosomal_bL36"/>
</dbReference>
<dbReference type="InterPro" id="IPR035977">
    <property type="entry name" value="Ribosomal_bL36_sp"/>
</dbReference>
<dbReference type="InterPro" id="IPR047621">
    <property type="entry name" value="Ribosomal_L36_bact"/>
</dbReference>
<dbReference type="NCBIfam" id="NF002021">
    <property type="entry name" value="PRK00831.1"/>
    <property type="match status" value="1"/>
</dbReference>
<dbReference type="PANTHER" id="PTHR47781">
    <property type="entry name" value="50S RIBOSOMAL PROTEIN L36 2"/>
    <property type="match status" value="1"/>
</dbReference>
<dbReference type="PANTHER" id="PTHR47781:SF1">
    <property type="entry name" value="LARGE RIBOSOMAL SUBUNIT PROTEIN BL36B"/>
    <property type="match status" value="1"/>
</dbReference>
<dbReference type="Pfam" id="PF00444">
    <property type="entry name" value="Ribosomal_L36"/>
    <property type="match status" value="1"/>
</dbReference>
<dbReference type="SUPFAM" id="SSF57840">
    <property type="entry name" value="Ribosomal protein L36"/>
    <property type="match status" value="1"/>
</dbReference>
<dbReference type="PROSITE" id="PS00828">
    <property type="entry name" value="RIBOSOMAL_L36"/>
    <property type="match status" value="1"/>
</dbReference>
<protein>
    <recommendedName>
        <fullName evidence="1">Large ribosomal subunit protein bL36</fullName>
    </recommendedName>
    <alternativeName>
        <fullName evidence="2">50S ribosomal protein L36</fullName>
    </alternativeName>
</protein>